<sequence length="134" mass="14684">MPTINQLIRKERKKAIKKSKSPALVNCPQRRGVCTRVYTTTPKKPNSALRKVAKVRLTSGFEVISYIPGEGHNLQEHSIVLIRGGRVKDLPGVKYHIIRGALDTAGVQKRNVSRSKYGAKKGKAGAAPTTGKKK</sequence>
<accession>Q7MA55</accession>
<protein>
    <recommendedName>
        <fullName evidence="2">Small ribosomal subunit protein uS12</fullName>
    </recommendedName>
    <alternativeName>
        <fullName evidence="4">30S ribosomal protein S12</fullName>
    </alternativeName>
</protein>
<name>RS12_WOLSU</name>
<organism>
    <name type="scientific">Wolinella succinogenes (strain ATCC 29543 / DSM 1740 / CCUG 13145 / JCM 31913 / LMG 7466 / NCTC 11488 / FDC 602W)</name>
    <name type="common">Vibrio succinogenes</name>
    <dbReference type="NCBI Taxonomy" id="273121"/>
    <lineage>
        <taxon>Bacteria</taxon>
        <taxon>Pseudomonadati</taxon>
        <taxon>Campylobacterota</taxon>
        <taxon>Epsilonproteobacteria</taxon>
        <taxon>Campylobacterales</taxon>
        <taxon>Helicobacteraceae</taxon>
        <taxon>Wolinella</taxon>
    </lineage>
</organism>
<evidence type="ECO:0000250" key="1"/>
<evidence type="ECO:0000255" key="2">
    <source>
        <dbReference type="HAMAP-Rule" id="MF_00403"/>
    </source>
</evidence>
<evidence type="ECO:0000256" key="3">
    <source>
        <dbReference type="SAM" id="MobiDB-lite"/>
    </source>
</evidence>
<evidence type="ECO:0000305" key="4"/>
<gene>
    <name evidence="2" type="primary">rpsL</name>
    <name type="ordered locus">WS0468</name>
</gene>
<proteinExistence type="inferred from homology"/>
<reference key="1">
    <citation type="journal article" date="2003" name="Proc. Natl. Acad. Sci. U.S.A.">
        <title>Complete genome sequence and analysis of Wolinella succinogenes.</title>
        <authorList>
            <person name="Baar C."/>
            <person name="Eppinger M."/>
            <person name="Raddatz G."/>
            <person name="Simon J."/>
            <person name="Lanz C."/>
            <person name="Klimmek O."/>
            <person name="Nandakumar R."/>
            <person name="Gross R."/>
            <person name="Rosinus A."/>
            <person name="Keller H."/>
            <person name="Jagtap P."/>
            <person name="Linke B."/>
            <person name="Meyer F."/>
            <person name="Lederer H."/>
            <person name="Schuster S.C."/>
        </authorList>
    </citation>
    <scope>NUCLEOTIDE SEQUENCE [LARGE SCALE GENOMIC DNA]</scope>
    <source>
        <strain>ATCC 29543 / DSM 1740 / CCUG 13145 / JCM 31913 / LMG 7466 / NCTC 11488 / FDC 602W</strain>
    </source>
</reference>
<dbReference type="EMBL" id="BX571658">
    <property type="protein sequence ID" value="CAE09608.1"/>
    <property type="molecule type" value="Genomic_DNA"/>
</dbReference>
<dbReference type="RefSeq" id="WP_011138408.1">
    <property type="nucleotide sequence ID" value="NC_005090.1"/>
</dbReference>
<dbReference type="SMR" id="Q7MA55"/>
<dbReference type="STRING" id="273121.WS0468"/>
<dbReference type="KEGG" id="wsu:WS0468"/>
<dbReference type="eggNOG" id="COG0048">
    <property type="taxonomic scope" value="Bacteria"/>
</dbReference>
<dbReference type="HOGENOM" id="CLU_104295_1_2_7"/>
<dbReference type="Proteomes" id="UP000000422">
    <property type="component" value="Chromosome"/>
</dbReference>
<dbReference type="GO" id="GO:0015935">
    <property type="term" value="C:small ribosomal subunit"/>
    <property type="evidence" value="ECO:0007669"/>
    <property type="project" value="InterPro"/>
</dbReference>
<dbReference type="GO" id="GO:0019843">
    <property type="term" value="F:rRNA binding"/>
    <property type="evidence" value="ECO:0007669"/>
    <property type="project" value="UniProtKB-UniRule"/>
</dbReference>
<dbReference type="GO" id="GO:0003735">
    <property type="term" value="F:structural constituent of ribosome"/>
    <property type="evidence" value="ECO:0007669"/>
    <property type="project" value="InterPro"/>
</dbReference>
<dbReference type="GO" id="GO:0000049">
    <property type="term" value="F:tRNA binding"/>
    <property type="evidence" value="ECO:0007669"/>
    <property type="project" value="UniProtKB-UniRule"/>
</dbReference>
<dbReference type="GO" id="GO:0006412">
    <property type="term" value="P:translation"/>
    <property type="evidence" value="ECO:0007669"/>
    <property type="project" value="UniProtKB-UniRule"/>
</dbReference>
<dbReference type="CDD" id="cd03368">
    <property type="entry name" value="Ribosomal_S12"/>
    <property type="match status" value="1"/>
</dbReference>
<dbReference type="FunFam" id="2.40.50.140:FF:000001">
    <property type="entry name" value="30S ribosomal protein S12"/>
    <property type="match status" value="1"/>
</dbReference>
<dbReference type="Gene3D" id="2.40.50.140">
    <property type="entry name" value="Nucleic acid-binding proteins"/>
    <property type="match status" value="1"/>
</dbReference>
<dbReference type="HAMAP" id="MF_00403_B">
    <property type="entry name" value="Ribosomal_uS12_B"/>
    <property type="match status" value="1"/>
</dbReference>
<dbReference type="InterPro" id="IPR012340">
    <property type="entry name" value="NA-bd_OB-fold"/>
</dbReference>
<dbReference type="InterPro" id="IPR006032">
    <property type="entry name" value="Ribosomal_uS12"/>
</dbReference>
<dbReference type="InterPro" id="IPR005679">
    <property type="entry name" value="Ribosomal_uS12_bac"/>
</dbReference>
<dbReference type="NCBIfam" id="TIGR00981">
    <property type="entry name" value="rpsL_bact"/>
    <property type="match status" value="1"/>
</dbReference>
<dbReference type="PANTHER" id="PTHR11652">
    <property type="entry name" value="30S RIBOSOMAL PROTEIN S12 FAMILY MEMBER"/>
    <property type="match status" value="1"/>
</dbReference>
<dbReference type="Pfam" id="PF00164">
    <property type="entry name" value="Ribosom_S12_S23"/>
    <property type="match status" value="1"/>
</dbReference>
<dbReference type="PIRSF" id="PIRSF002133">
    <property type="entry name" value="Ribosomal_S12/S23"/>
    <property type="match status" value="1"/>
</dbReference>
<dbReference type="PRINTS" id="PR01034">
    <property type="entry name" value="RIBOSOMALS12"/>
</dbReference>
<dbReference type="SUPFAM" id="SSF50249">
    <property type="entry name" value="Nucleic acid-binding proteins"/>
    <property type="match status" value="1"/>
</dbReference>
<dbReference type="PROSITE" id="PS00055">
    <property type="entry name" value="RIBOSOMAL_S12"/>
    <property type="match status" value="1"/>
</dbReference>
<comment type="function">
    <text evidence="2">With S4 and S5 plays an important role in translational accuracy.</text>
</comment>
<comment type="function">
    <text evidence="2">Interacts with and stabilizes bases of the 16S rRNA that are involved in tRNA selection in the A site and with the mRNA backbone. Located at the interface of the 30S and 50S subunits, it traverses the body of the 30S subunit contacting proteins on the other side and probably holding the rRNA structure together. The combined cluster of proteins S8, S12 and S17 appears to hold together the shoulder and platform of the 30S subunit.</text>
</comment>
<comment type="subunit">
    <text evidence="2">Part of the 30S ribosomal subunit. Contacts proteins S8 and S17. May interact with IF1 in the 30S initiation complex.</text>
</comment>
<comment type="similarity">
    <text evidence="2">Belongs to the universal ribosomal protein uS12 family.</text>
</comment>
<feature type="chain" id="PRO_0000146356" description="Small ribosomal subunit protein uS12">
    <location>
        <begin position="1"/>
        <end position="134"/>
    </location>
</feature>
<feature type="region of interest" description="Disordered" evidence="3">
    <location>
        <begin position="109"/>
        <end position="134"/>
    </location>
</feature>
<feature type="compositionally biased region" description="Basic residues" evidence="3">
    <location>
        <begin position="111"/>
        <end position="123"/>
    </location>
</feature>
<feature type="compositionally biased region" description="Low complexity" evidence="3">
    <location>
        <begin position="124"/>
        <end position="134"/>
    </location>
</feature>
<feature type="modified residue" description="3-methylthioaspartic acid" evidence="1">
    <location>
        <position position="89"/>
    </location>
</feature>
<keyword id="KW-0488">Methylation</keyword>
<keyword id="KW-1185">Reference proteome</keyword>
<keyword id="KW-0687">Ribonucleoprotein</keyword>
<keyword id="KW-0689">Ribosomal protein</keyword>
<keyword id="KW-0694">RNA-binding</keyword>
<keyword id="KW-0699">rRNA-binding</keyword>
<keyword id="KW-0820">tRNA-binding</keyword>